<comment type="function">
    <text evidence="1">Involved in the import of threonine and serine into the cell, with the concomitant import of a proton (symport system).</text>
</comment>
<comment type="catalytic activity">
    <reaction evidence="1">
        <text>L-threonine(in) + H(+)(in) = L-threonine(out) + H(+)(out)</text>
        <dbReference type="Rhea" id="RHEA:28883"/>
        <dbReference type="ChEBI" id="CHEBI:15378"/>
        <dbReference type="ChEBI" id="CHEBI:57926"/>
    </reaction>
    <physiologicalReaction direction="right-to-left" evidence="1">
        <dbReference type="Rhea" id="RHEA:28885"/>
    </physiologicalReaction>
</comment>
<comment type="catalytic activity">
    <reaction evidence="1">
        <text>L-serine(in) + H(+)(in) = L-serine(out) + H(+)(out)</text>
        <dbReference type="Rhea" id="RHEA:28887"/>
        <dbReference type="ChEBI" id="CHEBI:15378"/>
        <dbReference type="ChEBI" id="CHEBI:33384"/>
    </reaction>
    <physiologicalReaction direction="right-to-left" evidence="1">
        <dbReference type="Rhea" id="RHEA:28889"/>
    </physiologicalReaction>
</comment>
<comment type="subcellular location">
    <subcellularLocation>
        <location evidence="1">Cell inner membrane</location>
        <topology evidence="1">Multi-pass membrane protein</topology>
    </subcellularLocation>
</comment>
<comment type="similarity">
    <text evidence="1">Belongs to the amino acid/polyamine transporter 2 family. SdaC/TdcC subfamily.</text>
</comment>
<accession>A1AG28</accession>
<proteinExistence type="inferred from homology"/>
<dbReference type="EMBL" id="CP000468">
    <property type="protein sequence ID" value="ABJ02618.1"/>
    <property type="molecule type" value="Genomic_DNA"/>
</dbReference>
<dbReference type="RefSeq" id="WP_000107720.1">
    <property type="nucleotide sequence ID" value="NZ_CADILS010000003.1"/>
</dbReference>
<dbReference type="SMR" id="A1AG28"/>
<dbReference type="GeneID" id="75205075"/>
<dbReference type="KEGG" id="ecv:APECO1_3308"/>
<dbReference type="HOGENOM" id="CLU_052043_1_1_6"/>
<dbReference type="Proteomes" id="UP000008216">
    <property type="component" value="Chromosome"/>
</dbReference>
<dbReference type="GO" id="GO:0005886">
    <property type="term" value="C:plasma membrane"/>
    <property type="evidence" value="ECO:0007669"/>
    <property type="project" value="UniProtKB-SubCell"/>
</dbReference>
<dbReference type="GO" id="GO:0015194">
    <property type="term" value="F:L-serine transmembrane transporter activity"/>
    <property type="evidence" value="ECO:0007669"/>
    <property type="project" value="InterPro"/>
</dbReference>
<dbReference type="GO" id="GO:0015293">
    <property type="term" value="F:symporter activity"/>
    <property type="evidence" value="ECO:0007669"/>
    <property type="project" value="UniProtKB-UniRule"/>
</dbReference>
<dbReference type="GO" id="GO:0015565">
    <property type="term" value="F:threonine efflux transmembrane transporter activity"/>
    <property type="evidence" value="ECO:0007669"/>
    <property type="project" value="InterPro"/>
</dbReference>
<dbReference type="HAMAP" id="MF_01583">
    <property type="entry name" value="Thr_Ser_transp_TdcC"/>
    <property type="match status" value="1"/>
</dbReference>
<dbReference type="InterPro" id="IPR018227">
    <property type="entry name" value="Amino_acid_transport_2"/>
</dbReference>
<dbReference type="InterPro" id="IPR004694">
    <property type="entry name" value="Hydroxy_aa_transpt"/>
</dbReference>
<dbReference type="InterPro" id="IPR023726">
    <property type="entry name" value="Thr/Ser_transpt_TdcC"/>
</dbReference>
<dbReference type="NCBIfam" id="NF010152">
    <property type="entry name" value="PRK13629.1"/>
    <property type="match status" value="1"/>
</dbReference>
<dbReference type="NCBIfam" id="TIGR00814">
    <property type="entry name" value="stp"/>
    <property type="match status" value="1"/>
</dbReference>
<dbReference type="PANTHER" id="PTHR35334">
    <property type="entry name" value="SERINE TRANSPORTER"/>
    <property type="match status" value="1"/>
</dbReference>
<dbReference type="PANTHER" id="PTHR35334:SF1">
    <property type="entry name" value="THREONINE_SERINE TRANSPORTER TDCC"/>
    <property type="match status" value="1"/>
</dbReference>
<dbReference type="Pfam" id="PF03222">
    <property type="entry name" value="Trp_Tyr_perm"/>
    <property type="match status" value="1"/>
</dbReference>
<keyword id="KW-0029">Amino-acid transport</keyword>
<keyword id="KW-0997">Cell inner membrane</keyword>
<keyword id="KW-1003">Cell membrane</keyword>
<keyword id="KW-0472">Membrane</keyword>
<keyword id="KW-1185">Reference proteome</keyword>
<keyword id="KW-0769">Symport</keyword>
<keyword id="KW-0812">Transmembrane</keyword>
<keyword id="KW-1133">Transmembrane helix</keyword>
<keyword id="KW-0813">Transport</keyword>
<sequence>MSTSDSIVSSQTKQSSWRKSDTTWTLGLFGTAIGAGVLFFPIRAGFGGLIPILLMLVLAYPIAFYCHRALARLCLSGSNPSGNITETVEEHFGKTGGVVITFLYFFAICPLLWIYGVTITNTFMTFWENQLGFAPLNRGFVALFLLLLMAFVIWFGKDLMVKVMSYLVWPFIASLVLISLSLIPYWNSAVIDQVDLGSLSLTGHDGILITVWLGISIMVFSFNFSPIVSSFVVSKREEYEKDFGRDFTERKCSQIISRASMLMVAVVMFFAFSCLFTLSPANMAEAKAQNIPVLSYLANHFASMTGTKTTFAITLEYAASIIALVAIFKSFFGHYLGTLEGLNGLILKFGYKGDKTKVSLGKLNTISMIFIMGSTWVVAYANPNILDLIEAMGAPIIASLLCLLPMYAIRKAPSLAKYRGRLDNVFVTVIGLLTILNIVYKLF</sequence>
<gene>
    <name evidence="1" type="primary">tdcC</name>
    <name type="ordered locus">Ecok1_31240</name>
    <name type="ORF">APECO1_3308</name>
</gene>
<evidence type="ECO:0000255" key="1">
    <source>
        <dbReference type="HAMAP-Rule" id="MF_01583"/>
    </source>
</evidence>
<feature type="chain" id="PRO_0000309165" description="Threonine/serine transporter TdcC">
    <location>
        <begin position="1"/>
        <end position="443"/>
    </location>
</feature>
<feature type="transmembrane region" description="Helical" evidence="1">
    <location>
        <begin position="22"/>
        <end position="42"/>
    </location>
</feature>
<feature type="transmembrane region" description="Helical" evidence="1">
    <location>
        <begin position="44"/>
        <end position="64"/>
    </location>
</feature>
<feature type="transmembrane region" description="Helical" evidence="1">
    <location>
        <begin position="97"/>
        <end position="117"/>
    </location>
</feature>
<feature type="transmembrane region" description="Helical" evidence="1">
    <location>
        <begin position="140"/>
        <end position="160"/>
    </location>
</feature>
<feature type="transmembrane region" description="Helical" evidence="1">
    <location>
        <begin position="163"/>
        <end position="183"/>
    </location>
</feature>
<feature type="transmembrane region" description="Helical" evidence="1">
    <location>
        <begin position="207"/>
        <end position="227"/>
    </location>
</feature>
<feature type="transmembrane region" description="Helical" evidence="1">
    <location>
        <begin position="261"/>
        <end position="281"/>
    </location>
</feature>
<feature type="transmembrane region" description="Helical" evidence="1">
    <location>
        <begin position="311"/>
        <end position="331"/>
    </location>
</feature>
<feature type="transmembrane region" description="Helical" evidence="1">
    <location>
        <begin position="366"/>
        <end position="386"/>
    </location>
</feature>
<feature type="transmembrane region" description="Helical" evidence="1">
    <location>
        <begin position="389"/>
        <end position="409"/>
    </location>
</feature>
<feature type="transmembrane region" description="Helical" evidence="1">
    <location>
        <begin position="423"/>
        <end position="443"/>
    </location>
</feature>
<organism>
    <name type="scientific">Escherichia coli O1:K1 / APEC</name>
    <dbReference type="NCBI Taxonomy" id="405955"/>
    <lineage>
        <taxon>Bacteria</taxon>
        <taxon>Pseudomonadati</taxon>
        <taxon>Pseudomonadota</taxon>
        <taxon>Gammaproteobacteria</taxon>
        <taxon>Enterobacterales</taxon>
        <taxon>Enterobacteriaceae</taxon>
        <taxon>Escherichia</taxon>
    </lineage>
</organism>
<protein>
    <recommendedName>
        <fullName evidence="1">Threonine/serine transporter TdcC</fullName>
    </recommendedName>
    <alternativeName>
        <fullName evidence="1">H(+)/threonine-serine symporter</fullName>
    </alternativeName>
</protein>
<reference key="1">
    <citation type="journal article" date="2007" name="J. Bacteriol.">
        <title>The genome sequence of avian pathogenic Escherichia coli strain O1:K1:H7 shares strong similarities with human extraintestinal pathogenic E. coli genomes.</title>
        <authorList>
            <person name="Johnson T.J."/>
            <person name="Kariyawasam S."/>
            <person name="Wannemuehler Y."/>
            <person name="Mangiamele P."/>
            <person name="Johnson S.J."/>
            <person name="Doetkott C."/>
            <person name="Skyberg J.A."/>
            <person name="Lynne A.M."/>
            <person name="Johnson J.R."/>
            <person name="Nolan L.K."/>
        </authorList>
    </citation>
    <scope>NUCLEOTIDE SEQUENCE [LARGE SCALE GENOMIC DNA]</scope>
</reference>
<name>TDCC_ECOK1</name>